<keyword id="KW-0963">Cytoplasm</keyword>
<keyword id="KW-0227">DNA damage</keyword>
<keyword id="KW-0234">DNA repair</keyword>
<keyword id="KW-0235">DNA replication</keyword>
<keyword id="KW-0238">DNA-binding</keyword>
<keyword id="KW-0239">DNA-directed DNA polymerase</keyword>
<keyword id="KW-0460">Magnesium</keyword>
<keyword id="KW-0479">Metal-binding</keyword>
<keyword id="KW-0515">Mutator protein</keyword>
<keyword id="KW-0548">Nucleotidyltransferase</keyword>
<keyword id="KW-0808">Transferase</keyword>
<reference key="1">
    <citation type="journal article" date="2004" name="Nat. Genet.">
        <title>Evidence in the Legionella pneumophila genome for exploitation of host cell functions and high genome plasticity.</title>
        <authorList>
            <person name="Cazalet C."/>
            <person name="Rusniok C."/>
            <person name="Brueggemann H."/>
            <person name="Zidane N."/>
            <person name="Magnier A."/>
            <person name="Ma L."/>
            <person name="Tichit M."/>
            <person name="Jarraud S."/>
            <person name="Bouchier C."/>
            <person name="Vandenesch F."/>
            <person name="Kunst F."/>
            <person name="Etienne J."/>
            <person name="Glaser P."/>
            <person name="Buchrieser C."/>
        </authorList>
    </citation>
    <scope>NUCLEOTIDE SEQUENCE [LARGE SCALE GENOMIC DNA]</scope>
    <source>
        <strain>Paris</strain>
    </source>
</reference>
<protein>
    <recommendedName>
        <fullName evidence="1">DNA polymerase IV</fullName>
        <shortName evidence="1">Pol IV</shortName>
        <ecNumber evidence="1">2.7.7.7</ecNumber>
    </recommendedName>
</protein>
<feature type="chain" id="PRO_1000137137" description="DNA polymerase IV">
    <location>
        <begin position="1"/>
        <end position="355"/>
    </location>
</feature>
<feature type="domain" description="UmuC" evidence="1">
    <location>
        <begin position="7"/>
        <end position="188"/>
    </location>
</feature>
<feature type="active site" evidence="1">
    <location>
        <position position="107"/>
    </location>
</feature>
<feature type="binding site" evidence="1">
    <location>
        <position position="11"/>
    </location>
    <ligand>
        <name>Mg(2+)</name>
        <dbReference type="ChEBI" id="CHEBI:18420"/>
    </ligand>
</feature>
<feature type="binding site" evidence="1">
    <location>
        <position position="106"/>
    </location>
    <ligand>
        <name>Mg(2+)</name>
        <dbReference type="ChEBI" id="CHEBI:18420"/>
    </ligand>
</feature>
<feature type="site" description="Substrate discrimination" evidence="1">
    <location>
        <position position="16"/>
    </location>
</feature>
<sequence length="355" mass="40291">MNPIRKIIHIDMDCFYAAIEMRDFPELANKPIAVGGDAKRRGVIATCNYAARQFGIRSAMPTAHALKLCRELILRPVRMDVYQKESQYIRSLLTEYTDLVEPLSLDEAYLDVTESTQCQGSATWIAEEIRARIYQTRQLTASAGIAPNKSLAKIASDWHKPNGQMVIRPEDVSAFVLDLPVRKLFGVGPKMEEKLGALNIKTCADLQRYSVEYLLQKFGTMGQRLYELARGIDNRPVNPERIRKSISVEETYPKDLPNSEACLAVLPDLMARLEARIQRAGKISGIHNLFVKLKFNDFQQTTIERVMDKLDLIVLRQLIQEGFARRGMPVRLLGIGIKLKQENTYQSIQLPLLDL</sequence>
<comment type="function">
    <text evidence="1">Poorly processive, error-prone DNA polymerase involved in untargeted mutagenesis. Copies undamaged DNA at stalled replication forks, which arise in vivo from mismatched or misaligned primer ends. These misaligned primers can be extended by PolIV. Exhibits no 3'-5' exonuclease (proofreading) activity. May be involved in translesional synthesis, in conjunction with the beta clamp from PolIII.</text>
</comment>
<comment type="catalytic activity">
    <reaction evidence="1">
        <text>DNA(n) + a 2'-deoxyribonucleoside 5'-triphosphate = DNA(n+1) + diphosphate</text>
        <dbReference type="Rhea" id="RHEA:22508"/>
        <dbReference type="Rhea" id="RHEA-COMP:17339"/>
        <dbReference type="Rhea" id="RHEA-COMP:17340"/>
        <dbReference type="ChEBI" id="CHEBI:33019"/>
        <dbReference type="ChEBI" id="CHEBI:61560"/>
        <dbReference type="ChEBI" id="CHEBI:173112"/>
        <dbReference type="EC" id="2.7.7.7"/>
    </reaction>
</comment>
<comment type="cofactor">
    <cofactor evidence="1">
        <name>Mg(2+)</name>
        <dbReference type="ChEBI" id="CHEBI:18420"/>
    </cofactor>
    <text evidence="1">Binds 2 magnesium ions per subunit.</text>
</comment>
<comment type="subunit">
    <text evidence="1">Monomer.</text>
</comment>
<comment type="subcellular location">
    <subcellularLocation>
        <location evidence="1">Cytoplasm</location>
    </subcellularLocation>
</comment>
<comment type="similarity">
    <text evidence="1">Belongs to the DNA polymerase type-Y family.</text>
</comment>
<gene>
    <name evidence="1" type="primary">dinB</name>
    <name type="ordered locus">lpp0614</name>
</gene>
<dbReference type="EC" id="2.7.7.7" evidence="1"/>
<dbReference type="EMBL" id="CR628336">
    <property type="protein sequence ID" value="CAH11762.1"/>
    <property type="molecule type" value="Genomic_DNA"/>
</dbReference>
<dbReference type="RefSeq" id="WP_011213175.1">
    <property type="nucleotide sequence ID" value="NC_006368.1"/>
</dbReference>
<dbReference type="SMR" id="Q5X7J1"/>
<dbReference type="KEGG" id="lpp:lpp0614"/>
<dbReference type="LegioList" id="lpp0614"/>
<dbReference type="HOGENOM" id="CLU_012348_1_2_6"/>
<dbReference type="GO" id="GO:0005829">
    <property type="term" value="C:cytosol"/>
    <property type="evidence" value="ECO:0007669"/>
    <property type="project" value="TreeGrafter"/>
</dbReference>
<dbReference type="GO" id="GO:0003684">
    <property type="term" value="F:damaged DNA binding"/>
    <property type="evidence" value="ECO:0007669"/>
    <property type="project" value="InterPro"/>
</dbReference>
<dbReference type="GO" id="GO:0003887">
    <property type="term" value="F:DNA-directed DNA polymerase activity"/>
    <property type="evidence" value="ECO:0007669"/>
    <property type="project" value="UniProtKB-UniRule"/>
</dbReference>
<dbReference type="GO" id="GO:0000287">
    <property type="term" value="F:magnesium ion binding"/>
    <property type="evidence" value="ECO:0007669"/>
    <property type="project" value="UniProtKB-UniRule"/>
</dbReference>
<dbReference type="GO" id="GO:0006261">
    <property type="term" value="P:DNA-templated DNA replication"/>
    <property type="evidence" value="ECO:0007669"/>
    <property type="project" value="UniProtKB-UniRule"/>
</dbReference>
<dbReference type="GO" id="GO:0042276">
    <property type="term" value="P:error-prone translesion synthesis"/>
    <property type="evidence" value="ECO:0007669"/>
    <property type="project" value="TreeGrafter"/>
</dbReference>
<dbReference type="GO" id="GO:0009432">
    <property type="term" value="P:SOS response"/>
    <property type="evidence" value="ECO:0007669"/>
    <property type="project" value="TreeGrafter"/>
</dbReference>
<dbReference type="CDD" id="cd03586">
    <property type="entry name" value="PolY_Pol_IV_kappa"/>
    <property type="match status" value="1"/>
</dbReference>
<dbReference type="FunFam" id="1.10.150.20:FF:000019">
    <property type="entry name" value="DNA polymerase IV"/>
    <property type="match status" value="1"/>
</dbReference>
<dbReference type="FunFam" id="3.40.1170.60:FF:000001">
    <property type="entry name" value="DNA polymerase IV"/>
    <property type="match status" value="1"/>
</dbReference>
<dbReference type="Gene3D" id="3.30.70.270">
    <property type="match status" value="1"/>
</dbReference>
<dbReference type="Gene3D" id="3.40.1170.60">
    <property type="match status" value="1"/>
</dbReference>
<dbReference type="Gene3D" id="1.10.150.20">
    <property type="entry name" value="5' to 3' exonuclease, C-terminal subdomain"/>
    <property type="match status" value="1"/>
</dbReference>
<dbReference type="Gene3D" id="3.30.1490.100">
    <property type="entry name" value="DNA polymerase, Y-family, little finger domain"/>
    <property type="match status" value="1"/>
</dbReference>
<dbReference type="HAMAP" id="MF_01113">
    <property type="entry name" value="DNApol_IV"/>
    <property type="match status" value="1"/>
</dbReference>
<dbReference type="InterPro" id="IPR043502">
    <property type="entry name" value="DNA/RNA_pol_sf"/>
</dbReference>
<dbReference type="InterPro" id="IPR036775">
    <property type="entry name" value="DNA_pol_Y-fam_lit_finger_sf"/>
</dbReference>
<dbReference type="InterPro" id="IPR017961">
    <property type="entry name" value="DNA_pol_Y-fam_little_finger"/>
</dbReference>
<dbReference type="InterPro" id="IPR050116">
    <property type="entry name" value="DNA_polymerase-Y"/>
</dbReference>
<dbReference type="InterPro" id="IPR022880">
    <property type="entry name" value="DNApol_IV"/>
</dbReference>
<dbReference type="InterPro" id="IPR053848">
    <property type="entry name" value="IMS_HHH_1"/>
</dbReference>
<dbReference type="InterPro" id="IPR043128">
    <property type="entry name" value="Rev_trsase/Diguanyl_cyclase"/>
</dbReference>
<dbReference type="InterPro" id="IPR001126">
    <property type="entry name" value="UmuC"/>
</dbReference>
<dbReference type="NCBIfam" id="NF002677">
    <property type="entry name" value="PRK02406.1"/>
    <property type="match status" value="1"/>
</dbReference>
<dbReference type="PANTHER" id="PTHR11076:SF33">
    <property type="entry name" value="DNA POLYMERASE KAPPA"/>
    <property type="match status" value="1"/>
</dbReference>
<dbReference type="PANTHER" id="PTHR11076">
    <property type="entry name" value="DNA REPAIR POLYMERASE UMUC / TRANSFERASE FAMILY MEMBER"/>
    <property type="match status" value="1"/>
</dbReference>
<dbReference type="Pfam" id="PF00817">
    <property type="entry name" value="IMS"/>
    <property type="match status" value="1"/>
</dbReference>
<dbReference type="Pfam" id="PF11799">
    <property type="entry name" value="IMS_C"/>
    <property type="match status" value="1"/>
</dbReference>
<dbReference type="Pfam" id="PF21999">
    <property type="entry name" value="IMS_HHH_1"/>
    <property type="match status" value="1"/>
</dbReference>
<dbReference type="SUPFAM" id="SSF56672">
    <property type="entry name" value="DNA/RNA polymerases"/>
    <property type="match status" value="1"/>
</dbReference>
<dbReference type="SUPFAM" id="SSF100879">
    <property type="entry name" value="Lesion bypass DNA polymerase (Y-family), little finger domain"/>
    <property type="match status" value="1"/>
</dbReference>
<dbReference type="PROSITE" id="PS50173">
    <property type="entry name" value="UMUC"/>
    <property type="match status" value="1"/>
</dbReference>
<accession>Q5X7J1</accession>
<name>DPO4_LEGPA</name>
<organism>
    <name type="scientific">Legionella pneumophila (strain Paris)</name>
    <dbReference type="NCBI Taxonomy" id="297246"/>
    <lineage>
        <taxon>Bacteria</taxon>
        <taxon>Pseudomonadati</taxon>
        <taxon>Pseudomonadota</taxon>
        <taxon>Gammaproteobacteria</taxon>
        <taxon>Legionellales</taxon>
        <taxon>Legionellaceae</taxon>
        <taxon>Legionella</taxon>
    </lineage>
</organism>
<evidence type="ECO:0000255" key="1">
    <source>
        <dbReference type="HAMAP-Rule" id="MF_01113"/>
    </source>
</evidence>
<proteinExistence type="inferred from homology"/>